<proteinExistence type="inferred from homology"/>
<name>RPRM_RAT</name>
<evidence type="ECO:0000250" key="1"/>
<evidence type="ECO:0000250" key="2">
    <source>
        <dbReference type="UniProtKB" id="Q9JJ72"/>
    </source>
</evidence>
<evidence type="ECO:0000255" key="3"/>
<evidence type="ECO:0000305" key="4"/>
<reference key="1">
    <citation type="journal article" date="2004" name="Genome Res.">
        <title>The status, quality, and expansion of the NIH full-length cDNA project: the Mammalian Gene Collection (MGC).</title>
        <authorList>
            <consortium name="The MGC Project Team"/>
        </authorList>
    </citation>
    <scope>NUCLEOTIDE SEQUENCE [LARGE SCALE MRNA]</scope>
    <source>
        <tissue>Liver</tissue>
    </source>
</reference>
<protein>
    <recommendedName>
        <fullName>Protein reprimo</fullName>
    </recommendedName>
</protein>
<accession>Q5BJN9</accession>
<gene>
    <name type="primary">Rprm</name>
</gene>
<keyword id="KW-0963">Cytoplasm</keyword>
<keyword id="KW-0325">Glycoprotein</keyword>
<keyword id="KW-0472">Membrane</keyword>
<keyword id="KW-0597">Phosphoprotein</keyword>
<keyword id="KW-1185">Reference proteome</keyword>
<keyword id="KW-0812">Transmembrane</keyword>
<keyword id="KW-1133">Transmembrane helix</keyword>
<dbReference type="EMBL" id="BC091400">
    <property type="protein sequence ID" value="AAH91400.1"/>
    <property type="molecule type" value="mRNA"/>
</dbReference>
<dbReference type="RefSeq" id="NP_001037741.1">
    <property type="nucleotide sequence ID" value="NM_001044276.1"/>
</dbReference>
<dbReference type="FunCoup" id="Q5BJN9">
    <property type="interactions" value="292"/>
</dbReference>
<dbReference type="STRING" id="10116.ENSRNOP00000006784"/>
<dbReference type="GlyCosmos" id="Q5BJN9">
    <property type="glycosylation" value="2 sites, No reported glycans"/>
</dbReference>
<dbReference type="GlyGen" id="Q5BJN9">
    <property type="glycosylation" value="2 sites"/>
</dbReference>
<dbReference type="PhosphoSitePlus" id="Q5BJN9"/>
<dbReference type="PaxDb" id="10116-ENSRNOP00000006784"/>
<dbReference type="Ensembl" id="ENSRNOT00000006784.4">
    <property type="protein sequence ID" value="ENSRNOP00000006784.1"/>
    <property type="gene ID" value="ENSRNOG00000005109.4"/>
</dbReference>
<dbReference type="GeneID" id="680110"/>
<dbReference type="KEGG" id="rno:680110"/>
<dbReference type="UCSC" id="RGD:1595512">
    <property type="organism name" value="rat"/>
</dbReference>
<dbReference type="AGR" id="RGD:1595512"/>
<dbReference type="CTD" id="56475"/>
<dbReference type="RGD" id="1595512">
    <property type="gene designation" value="Rprm"/>
</dbReference>
<dbReference type="eggNOG" id="ENOG502S262">
    <property type="taxonomic scope" value="Eukaryota"/>
</dbReference>
<dbReference type="GeneTree" id="ENSGT00390000010523"/>
<dbReference type="HOGENOM" id="CLU_170456_0_0_1"/>
<dbReference type="InParanoid" id="Q5BJN9"/>
<dbReference type="OMA" id="LKCCNFS"/>
<dbReference type="OrthoDB" id="8570856at2759"/>
<dbReference type="PhylomeDB" id="Q5BJN9"/>
<dbReference type="TreeFam" id="TF332720"/>
<dbReference type="PRO" id="PR:Q5BJN9"/>
<dbReference type="Proteomes" id="UP000002494">
    <property type="component" value="Chromosome 3"/>
</dbReference>
<dbReference type="Bgee" id="ENSRNOG00000005109">
    <property type="expression patterns" value="Expressed in frontal cortex and 16 other cell types or tissues"/>
</dbReference>
<dbReference type="GO" id="GO:0005737">
    <property type="term" value="C:cytoplasm"/>
    <property type="evidence" value="ECO:0000266"/>
    <property type="project" value="RGD"/>
</dbReference>
<dbReference type="GO" id="GO:0016020">
    <property type="term" value="C:membrane"/>
    <property type="evidence" value="ECO:0007669"/>
    <property type="project" value="UniProtKB-SubCell"/>
</dbReference>
<dbReference type="GO" id="GO:0051726">
    <property type="term" value="P:regulation of cell cycle"/>
    <property type="evidence" value="ECO:0000266"/>
    <property type="project" value="RGD"/>
</dbReference>
<dbReference type="GO" id="GO:0007346">
    <property type="term" value="P:regulation of mitotic cell cycle"/>
    <property type="evidence" value="ECO:0000266"/>
    <property type="project" value="RGD"/>
</dbReference>
<dbReference type="InterPro" id="IPR043383">
    <property type="entry name" value="Reprimo_fam"/>
</dbReference>
<dbReference type="PANTHER" id="PTHR28649:SF2">
    <property type="entry name" value="PROTEIN REPRIMO"/>
    <property type="match status" value="1"/>
</dbReference>
<dbReference type="PANTHER" id="PTHR28649">
    <property type="entry name" value="PROTEIN REPRIMO-RELATED"/>
    <property type="match status" value="1"/>
</dbReference>
<feature type="chain" id="PRO_0000312754" description="Protein reprimo">
    <location>
        <begin position="1"/>
        <end position="109"/>
    </location>
</feature>
<feature type="transmembrane region" description="Helical" evidence="3">
    <location>
        <begin position="56"/>
        <end position="76"/>
    </location>
</feature>
<feature type="modified residue" description="Phosphoserine" evidence="2">
    <location>
        <position position="98"/>
    </location>
</feature>
<feature type="glycosylation site" description="N-linked (GlcNAc...) asparagine" evidence="3">
    <location>
        <position position="7"/>
    </location>
</feature>
<feature type="glycosylation site" description="N-linked (GlcNAc...) asparagine" evidence="3">
    <location>
        <position position="18"/>
    </location>
</feature>
<comment type="function">
    <text evidence="1">May be involved in the regulation of p53-dependent G2 arrest of the cell cycle. Seems to induce cell cycle arrest by inhibiting CDK1 activity and nuclear translocation of the CDC2 cyclin B1 complex (By similarity).</text>
</comment>
<comment type="subcellular location">
    <subcellularLocation>
        <location evidence="1">Cytoplasm</location>
    </subcellularLocation>
    <subcellularLocation>
        <location evidence="4">Membrane</location>
        <topology evidence="4">Single-pass membrane protein</topology>
    </subcellularLocation>
</comment>
<comment type="similarity">
    <text evidence="4">Belongs to the reprimo family.</text>
</comment>
<sequence>MNSVLGNQTDVAGLFLANSSEALERAVRCCTQASVVTDDGFAEGGPDERSLYIMRVVQIAVMCVLSLTVVFGIFFLGCNLLIKSEGMINFLVKDRRPSKEVEAVVVGPY</sequence>
<organism>
    <name type="scientific">Rattus norvegicus</name>
    <name type="common">Rat</name>
    <dbReference type="NCBI Taxonomy" id="10116"/>
    <lineage>
        <taxon>Eukaryota</taxon>
        <taxon>Metazoa</taxon>
        <taxon>Chordata</taxon>
        <taxon>Craniata</taxon>
        <taxon>Vertebrata</taxon>
        <taxon>Euteleostomi</taxon>
        <taxon>Mammalia</taxon>
        <taxon>Eutheria</taxon>
        <taxon>Euarchontoglires</taxon>
        <taxon>Glires</taxon>
        <taxon>Rodentia</taxon>
        <taxon>Myomorpha</taxon>
        <taxon>Muroidea</taxon>
        <taxon>Muridae</taxon>
        <taxon>Murinae</taxon>
        <taxon>Rattus</taxon>
    </lineage>
</organism>